<reference key="1">
    <citation type="journal article" date="1999" name="Proc. Natl. Acad. Sci. U.S.A.">
        <title>The complete chloroplast DNA sequence of the green alga Nephroselmis olivacea: insights into the architecture of ancestral chloroplast genomes.</title>
        <authorList>
            <person name="Turmel M."/>
            <person name="Otis C."/>
            <person name="Lemieux C."/>
        </authorList>
    </citation>
    <scope>NUCLEOTIDE SEQUENCE [LARGE SCALE GENOMIC DNA]</scope>
    <source>
        <strain>NIES-484 / S-N-5-8</strain>
    </source>
</reference>
<geneLocation type="chloroplast"/>
<dbReference type="EMBL" id="AF137379">
    <property type="protein sequence ID" value="AAD54802.1"/>
    <property type="molecule type" value="Genomic_DNA"/>
</dbReference>
<dbReference type="RefSeq" id="NP_050831.1">
    <property type="nucleotide sequence ID" value="NC_000927.1"/>
</dbReference>
<dbReference type="SMR" id="Q9TL14"/>
<dbReference type="GeneID" id="801938"/>
<dbReference type="GO" id="GO:0009535">
    <property type="term" value="C:chloroplast thylakoid membrane"/>
    <property type="evidence" value="ECO:0007669"/>
    <property type="project" value="UniProtKB-SubCell"/>
</dbReference>
<dbReference type="GO" id="GO:0045259">
    <property type="term" value="C:proton-transporting ATP synthase complex"/>
    <property type="evidence" value="ECO:0007669"/>
    <property type="project" value="UniProtKB-KW"/>
</dbReference>
<dbReference type="GO" id="GO:0033177">
    <property type="term" value="C:proton-transporting two-sector ATPase complex, proton-transporting domain"/>
    <property type="evidence" value="ECO:0007669"/>
    <property type="project" value="InterPro"/>
</dbReference>
<dbReference type="GO" id="GO:0008289">
    <property type="term" value="F:lipid binding"/>
    <property type="evidence" value="ECO:0007669"/>
    <property type="project" value="UniProtKB-KW"/>
</dbReference>
<dbReference type="GO" id="GO:0046933">
    <property type="term" value="F:proton-transporting ATP synthase activity, rotational mechanism"/>
    <property type="evidence" value="ECO:0007669"/>
    <property type="project" value="UniProtKB-UniRule"/>
</dbReference>
<dbReference type="CDD" id="cd18183">
    <property type="entry name" value="ATP-synt_Fo_c_ATPH"/>
    <property type="match status" value="1"/>
</dbReference>
<dbReference type="FunFam" id="1.20.20.10:FF:000001">
    <property type="entry name" value="ATP synthase subunit c, chloroplastic"/>
    <property type="match status" value="1"/>
</dbReference>
<dbReference type="Gene3D" id="1.20.20.10">
    <property type="entry name" value="F1F0 ATP synthase subunit C"/>
    <property type="match status" value="1"/>
</dbReference>
<dbReference type="HAMAP" id="MF_01396">
    <property type="entry name" value="ATP_synth_c_bact"/>
    <property type="match status" value="1"/>
</dbReference>
<dbReference type="InterPro" id="IPR005953">
    <property type="entry name" value="ATP_synth_csu_bac/chlpt"/>
</dbReference>
<dbReference type="InterPro" id="IPR000454">
    <property type="entry name" value="ATP_synth_F0_csu"/>
</dbReference>
<dbReference type="InterPro" id="IPR020537">
    <property type="entry name" value="ATP_synth_F0_csu_DDCD_BS"/>
</dbReference>
<dbReference type="InterPro" id="IPR038662">
    <property type="entry name" value="ATP_synth_F0_csu_sf"/>
</dbReference>
<dbReference type="InterPro" id="IPR002379">
    <property type="entry name" value="ATPase_proteolipid_c-like_dom"/>
</dbReference>
<dbReference type="InterPro" id="IPR035921">
    <property type="entry name" value="F/V-ATP_Csub_sf"/>
</dbReference>
<dbReference type="NCBIfam" id="TIGR01260">
    <property type="entry name" value="ATP_synt_c"/>
    <property type="match status" value="1"/>
</dbReference>
<dbReference type="NCBIfam" id="NF005608">
    <property type="entry name" value="PRK07354.1"/>
    <property type="match status" value="1"/>
</dbReference>
<dbReference type="PANTHER" id="PTHR10031">
    <property type="entry name" value="ATP SYNTHASE LIPID-BINDING PROTEIN, MITOCHONDRIAL"/>
    <property type="match status" value="1"/>
</dbReference>
<dbReference type="PANTHER" id="PTHR10031:SF0">
    <property type="entry name" value="ATPASE PROTEIN 9"/>
    <property type="match status" value="1"/>
</dbReference>
<dbReference type="Pfam" id="PF00137">
    <property type="entry name" value="ATP-synt_C"/>
    <property type="match status" value="1"/>
</dbReference>
<dbReference type="PRINTS" id="PR00124">
    <property type="entry name" value="ATPASEC"/>
</dbReference>
<dbReference type="SUPFAM" id="SSF81333">
    <property type="entry name" value="F1F0 ATP synthase subunit C"/>
    <property type="match status" value="1"/>
</dbReference>
<dbReference type="PROSITE" id="PS00605">
    <property type="entry name" value="ATPASE_C"/>
    <property type="match status" value="1"/>
</dbReference>
<feature type="chain" id="PRO_0000112194" description="ATP synthase subunit c, chloroplastic">
    <location>
        <begin position="1"/>
        <end position="82"/>
    </location>
</feature>
<feature type="transmembrane region" description="Helical" evidence="1">
    <location>
        <begin position="3"/>
        <end position="23"/>
    </location>
</feature>
<feature type="transmembrane region" description="Helical" evidence="1">
    <location>
        <begin position="57"/>
        <end position="77"/>
    </location>
</feature>
<feature type="site" description="Reversibly protonated during proton transport" evidence="1">
    <location>
        <position position="61"/>
    </location>
</feature>
<comment type="function">
    <text evidence="1">F(1)F(0) ATP synthase produces ATP from ADP in the presence of a proton or sodium gradient. F-type ATPases consist of two structural domains, F(1) containing the extramembraneous catalytic core and F(0) containing the membrane proton channel, linked together by a central stalk and a peripheral stalk. During catalysis, ATP synthesis in the catalytic domain of F(1) is coupled via a rotary mechanism of the central stalk subunits to proton translocation.</text>
</comment>
<comment type="function">
    <text evidence="1">Key component of the F(0) channel; it plays a direct role in translocation across the membrane. A homomeric c-ring of between 10-14 subunits forms the central stalk rotor element with the F(1) delta and epsilon subunits.</text>
</comment>
<comment type="subunit">
    <text evidence="1">F-type ATPases have 2 components, F(1) - the catalytic core - and F(0) - the membrane proton channel. F(1) has five subunits: alpha(3), beta(3), gamma(1), delta(1), epsilon(1). F(0) has four main subunits: a(1), b(1), b'(1) and c(10-14). The alpha and beta chains form an alternating ring which encloses part of the gamma chain. F(1) is attached to F(0) by a central stalk formed by the gamma and epsilon chains, while a peripheral stalk is formed by the delta, b and b' chains.</text>
</comment>
<comment type="subcellular location">
    <subcellularLocation>
        <location evidence="1">Plastid</location>
        <location evidence="1">Chloroplast thylakoid membrane</location>
        <topology evidence="1">Multi-pass membrane protein</topology>
    </subcellularLocation>
</comment>
<comment type="miscellaneous">
    <text>In plastids the F-type ATPase is also known as CF(1)CF(0).</text>
</comment>
<comment type="similarity">
    <text evidence="1">Belongs to the ATPase C chain family.</text>
</comment>
<sequence>MSPLIAAASVVAAGLAVGLASIGPGIGQGTAAGQAVGGIARQPEAEGKIRGTLLLSLAFMEALTIYGLVVALALLFANPFVS</sequence>
<accession>Q9TL14</accession>
<name>ATPH_NEPOL</name>
<protein>
    <recommendedName>
        <fullName evidence="1">ATP synthase subunit c, chloroplastic</fullName>
    </recommendedName>
    <alternativeName>
        <fullName evidence="1">ATP synthase F(0) sector subunit c</fullName>
    </alternativeName>
    <alternativeName>
        <fullName evidence="1">ATPase subunit III</fullName>
    </alternativeName>
    <alternativeName>
        <fullName evidence="1">F-type ATPase subunit c</fullName>
        <shortName evidence="1">F-ATPase subunit c</shortName>
    </alternativeName>
    <alternativeName>
        <fullName evidence="1">Lipid-binding protein</fullName>
    </alternativeName>
</protein>
<gene>
    <name evidence="1" type="primary">atpH</name>
</gene>
<organism>
    <name type="scientific">Nephroselmis olivacea</name>
    <name type="common">Green alga</name>
    <dbReference type="NCBI Taxonomy" id="31312"/>
    <lineage>
        <taxon>Eukaryota</taxon>
        <taxon>Viridiplantae</taxon>
        <taxon>Chlorophyta</taxon>
        <taxon>Nephroselmidophyceae</taxon>
        <taxon>Nephroselmidales</taxon>
        <taxon>Nephroselmidaceae</taxon>
        <taxon>Nephroselmis</taxon>
    </lineage>
</organism>
<keyword id="KW-0066">ATP synthesis</keyword>
<keyword id="KW-0138">CF(0)</keyword>
<keyword id="KW-0150">Chloroplast</keyword>
<keyword id="KW-0375">Hydrogen ion transport</keyword>
<keyword id="KW-0406">Ion transport</keyword>
<keyword id="KW-0446">Lipid-binding</keyword>
<keyword id="KW-0472">Membrane</keyword>
<keyword id="KW-0934">Plastid</keyword>
<keyword id="KW-0793">Thylakoid</keyword>
<keyword id="KW-0812">Transmembrane</keyword>
<keyword id="KW-1133">Transmembrane helix</keyword>
<keyword id="KW-0813">Transport</keyword>
<proteinExistence type="inferred from homology"/>
<evidence type="ECO:0000255" key="1">
    <source>
        <dbReference type="HAMAP-Rule" id="MF_01396"/>
    </source>
</evidence>